<protein>
    <recommendedName>
        <fullName evidence="1">Small ribosomal subunit protein eS4</fullName>
    </recommendedName>
    <alternativeName>
        <fullName evidence="2">30S ribosomal protein S4e</fullName>
    </alternativeName>
</protein>
<organism>
    <name type="scientific">Methanococcus maripaludis (strain DSM 14266 / JCM 13030 / NBRC 101832 / S2 / LL)</name>
    <dbReference type="NCBI Taxonomy" id="267377"/>
    <lineage>
        <taxon>Archaea</taxon>
        <taxon>Methanobacteriati</taxon>
        <taxon>Methanobacteriota</taxon>
        <taxon>Methanomada group</taxon>
        <taxon>Methanococci</taxon>
        <taxon>Methanococcales</taxon>
        <taxon>Methanococcaceae</taxon>
        <taxon>Methanococcus</taxon>
    </lineage>
</organism>
<dbReference type="EMBL" id="BX950229">
    <property type="protein sequence ID" value="CAF30967.1"/>
    <property type="molecule type" value="Genomic_DNA"/>
</dbReference>
<dbReference type="RefSeq" id="WP_011171355.1">
    <property type="nucleotide sequence ID" value="NC_005791.1"/>
</dbReference>
<dbReference type="SMR" id="P62428"/>
<dbReference type="STRING" id="267377.MMP1411"/>
<dbReference type="EnsemblBacteria" id="CAF30967">
    <property type="protein sequence ID" value="CAF30967"/>
    <property type="gene ID" value="MMP1411"/>
</dbReference>
<dbReference type="KEGG" id="mmp:MMP1411"/>
<dbReference type="PATRIC" id="fig|267377.15.peg.1447"/>
<dbReference type="eggNOG" id="arCOG04093">
    <property type="taxonomic scope" value="Archaea"/>
</dbReference>
<dbReference type="HOGENOM" id="CLU_060400_0_0_2"/>
<dbReference type="OrthoDB" id="372073at2157"/>
<dbReference type="Proteomes" id="UP000000590">
    <property type="component" value="Chromosome"/>
</dbReference>
<dbReference type="GO" id="GO:0022627">
    <property type="term" value="C:cytosolic small ribosomal subunit"/>
    <property type="evidence" value="ECO:0007669"/>
    <property type="project" value="TreeGrafter"/>
</dbReference>
<dbReference type="GO" id="GO:0019843">
    <property type="term" value="F:rRNA binding"/>
    <property type="evidence" value="ECO:0007669"/>
    <property type="project" value="UniProtKB-KW"/>
</dbReference>
<dbReference type="GO" id="GO:0003735">
    <property type="term" value="F:structural constituent of ribosome"/>
    <property type="evidence" value="ECO:0007669"/>
    <property type="project" value="InterPro"/>
</dbReference>
<dbReference type="GO" id="GO:0006412">
    <property type="term" value="P:translation"/>
    <property type="evidence" value="ECO:0007669"/>
    <property type="project" value="UniProtKB-UniRule"/>
</dbReference>
<dbReference type="CDD" id="cd06087">
    <property type="entry name" value="KOW_RPS4"/>
    <property type="match status" value="1"/>
</dbReference>
<dbReference type="CDD" id="cd00165">
    <property type="entry name" value="S4"/>
    <property type="match status" value="1"/>
</dbReference>
<dbReference type="FunFam" id="3.10.290.10:FF:000002">
    <property type="entry name" value="40S ribosomal protein S4"/>
    <property type="match status" value="1"/>
</dbReference>
<dbReference type="Gene3D" id="2.30.30.30">
    <property type="match status" value="1"/>
</dbReference>
<dbReference type="Gene3D" id="2.40.50.740">
    <property type="match status" value="1"/>
</dbReference>
<dbReference type="Gene3D" id="3.10.290.10">
    <property type="entry name" value="RNA-binding S4 domain"/>
    <property type="match status" value="1"/>
</dbReference>
<dbReference type="HAMAP" id="MF_00485">
    <property type="entry name" value="Ribosomal_eS4"/>
    <property type="match status" value="1"/>
</dbReference>
<dbReference type="InterPro" id="IPR014722">
    <property type="entry name" value="Rib_uL2_dom2"/>
</dbReference>
<dbReference type="InterPro" id="IPR000876">
    <property type="entry name" value="Ribosomal_eS4"/>
</dbReference>
<dbReference type="InterPro" id="IPR013845">
    <property type="entry name" value="Ribosomal_eS4_central_region"/>
</dbReference>
<dbReference type="InterPro" id="IPR038237">
    <property type="entry name" value="Ribosomal_eS4_central_sf"/>
</dbReference>
<dbReference type="InterPro" id="IPR041982">
    <property type="entry name" value="Ribosomal_eS4_KOW"/>
</dbReference>
<dbReference type="InterPro" id="IPR013843">
    <property type="entry name" value="Ribosomal_eS4_N"/>
</dbReference>
<dbReference type="InterPro" id="IPR018199">
    <property type="entry name" value="Ribosomal_eS4_N_CS"/>
</dbReference>
<dbReference type="InterPro" id="IPR036986">
    <property type="entry name" value="S4_RNA-bd_sf"/>
</dbReference>
<dbReference type="NCBIfam" id="NF003312">
    <property type="entry name" value="PRK04313.1"/>
    <property type="match status" value="1"/>
</dbReference>
<dbReference type="PANTHER" id="PTHR11581">
    <property type="entry name" value="30S/40S RIBOSOMAL PROTEIN S4"/>
    <property type="match status" value="1"/>
</dbReference>
<dbReference type="PANTHER" id="PTHR11581:SF0">
    <property type="entry name" value="SMALL RIBOSOMAL SUBUNIT PROTEIN ES4"/>
    <property type="match status" value="1"/>
</dbReference>
<dbReference type="Pfam" id="PF00900">
    <property type="entry name" value="Ribosomal_S4e"/>
    <property type="match status" value="1"/>
</dbReference>
<dbReference type="Pfam" id="PF08071">
    <property type="entry name" value="RS4NT"/>
    <property type="match status" value="1"/>
</dbReference>
<dbReference type="PIRSF" id="PIRSF002116">
    <property type="entry name" value="Ribosomal_S4"/>
    <property type="match status" value="1"/>
</dbReference>
<dbReference type="PROSITE" id="PS00528">
    <property type="entry name" value="RIBOSOMAL_S4E"/>
    <property type="match status" value="1"/>
</dbReference>
<dbReference type="PROSITE" id="PS50889">
    <property type="entry name" value="S4"/>
    <property type="match status" value="1"/>
</dbReference>
<feature type="chain" id="PRO_0000130852" description="Small ribosomal subunit protein eS4">
    <location>
        <begin position="1"/>
        <end position="244"/>
    </location>
</feature>
<feature type="domain" description="S4 RNA-binding" evidence="1">
    <location>
        <begin position="43"/>
        <end position="106"/>
    </location>
</feature>
<gene>
    <name evidence="1" type="primary">rps4e</name>
    <name type="ordered locus">MMP1411</name>
</gene>
<reference key="1">
    <citation type="journal article" date="2004" name="J. Bacteriol.">
        <title>Complete genome sequence of the genetically tractable hydrogenotrophic methanogen Methanococcus maripaludis.</title>
        <authorList>
            <person name="Hendrickson E.L."/>
            <person name="Kaul R."/>
            <person name="Zhou Y."/>
            <person name="Bovee D."/>
            <person name="Chapman P."/>
            <person name="Chung J."/>
            <person name="Conway de Macario E."/>
            <person name="Dodsworth J.A."/>
            <person name="Gillett W."/>
            <person name="Graham D.E."/>
            <person name="Hackett M."/>
            <person name="Haydock A.K."/>
            <person name="Kang A."/>
            <person name="Land M.L."/>
            <person name="Levy R."/>
            <person name="Lie T.J."/>
            <person name="Major T.A."/>
            <person name="Moore B.C."/>
            <person name="Porat I."/>
            <person name="Palmeiri A."/>
            <person name="Rouse G."/>
            <person name="Saenphimmachak C."/>
            <person name="Soell D."/>
            <person name="Van Dien S."/>
            <person name="Wang T."/>
            <person name="Whitman W.B."/>
            <person name="Xia Q."/>
            <person name="Zhang Y."/>
            <person name="Larimer F.W."/>
            <person name="Olson M.V."/>
            <person name="Leigh J.A."/>
        </authorList>
    </citation>
    <scope>NUCLEOTIDE SEQUENCE [LARGE SCALE GENOMIC DNA]</scope>
    <source>
        <strain>DSM 14266 / JCM 13030 / NBRC 101832 / S2 / LL</strain>
    </source>
</reference>
<sequence>MAIKGPRKHLKRLAAPANWQLPRKVKTFTVRPSPGPHSMDKSLPLLLVVRDVLKYADNAREAKKIIQTGKILIDGLKRKEYKHPAGLMDVLSIPEMDETYLVLFDESGRISLKKTDKTDVKLCKIVNKTVVKGGNIQLNLHDGRNQIVKVSDAAKAEEDVYKTGDSVLISIPEQSIAGHVAFGEGKLAYITGGKHVGEFAKIVEVENRALYSDIVTLENKDGEKFKTVKPYVFIVGQDEPVISM</sequence>
<keyword id="KW-1185">Reference proteome</keyword>
<keyword id="KW-0687">Ribonucleoprotein</keyword>
<keyword id="KW-0689">Ribosomal protein</keyword>
<keyword id="KW-0694">RNA-binding</keyword>
<keyword id="KW-0699">rRNA-binding</keyword>
<comment type="similarity">
    <text evidence="1">Belongs to the eukaryotic ribosomal protein eS4 family.</text>
</comment>
<evidence type="ECO:0000255" key="1">
    <source>
        <dbReference type="HAMAP-Rule" id="MF_00485"/>
    </source>
</evidence>
<evidence type="ECO:0000305" key="2"/>
<proteinExistence type="inferred from homology"/>
<name>RS4E_METMP</name>
<accession>P62428</accession>